<reference key="1">
    <citation type="journal article" date="2001" name="Nature">
        <title>Genome sequence of Yersinia pestis, the causative agent of plague.</title>
        <authorList>
            <person name="Parkhill J."/>
            <person name="Wren B.W."/>
            <person name="Thomson N.R."/>
            <person name="Titball R.W."/>
            <person name="Holden M.T.G."/>
            <person name="Prentice M.B."/>
            <person name="Sebaihia M."/>
            <person name="James K.D."/>
            <person name="Churcher C.M."/>
            <person name="Mungall K.L."/>
            <person name="Baker S."/>
            <person name="Basham D."/>
            <person name="Bentley S.D."/>
            <person name="Brooks K."/>
            <person name="Cerdeno-Tarraga A.-M."/>
            <person name="Chillingworth T."/>
            <person name="Cronin A."/>
            <person name="Davies R.M."/>
            <person name="Davis P."/>
            <person name="Dougan G."/>
            <person name="Feltwell T."/>
            <person name="Hamlin N."/>
            <person name="Holroyd S."/>
            <person name="Jagels K."/>
            <person name="Karlyshev A.V."/>
            <person name="Leather S."/>
            <person name="Moule S."/>
            <person name="Oyston P.C.F."/>
            <person name="Quail M.A."/>
            <person name="Rutherford K.M."/>
            <person name="Simmonds M."/>
            <person name="Skelton J."/>
            <person name="Stevens K."/>
            <person name="Whitehead S."/>
            <person name="Barrell B.G."/>
        </authorList>
    </citation>
    <scope>NUCLEOTIDE SEQUENCE [LARGE SCALE GENOMIC DNA]</scope>
    <source>
        <strain>CO-92 / Biovar Orientalis</strain>
    </source>
</reference>
<reference key="2">
    <citation type="journal article" date="2002" name="J. Bacteriol.">
        <title>Genome sequence of Yersinia pestis KIM.</title>
        <authorList>
            <person name="Deng W."/>
            <person name="Burland V."/>
            <person name="Plunkett G. III"/>
            <person name="Boutin A."/>
            <person name="Mayhew G.F."/>
            <person name="Liss P."/>
            <person name="Perna N.T."/>
            <person name="Rose D.J."/>
            <person name="Mau B."/>
            <person name="Zhou S."/>
            <person name="Schwartz D.C."/>
            <person name="Fetherston J.D."/>
            <person name="Lindler L.E."/>
            <person name="Brubaker R.R."/>
            <person name="Plano G.V."/>
            <person name="Straley S.C."/>
            <person name="McDonough K.A."/>
            <person name="Nilles M.L."/>
            <person name="Matson J.S."/>
            <person name="Blattner F.R."/>
            <person name="Perry R.D."/>
        </authorList>
    </citation>
    <scope>NUCLEOTIDE SEQUENCE [LARGE SCALE GENOMIC DNA]</scope>
    <source>
        <strain>KIM10+ / Biovar Mediaevalis</strain>
    </source>
</reference>
<reference key="3">
    <citation type="journal article" date="2004" name="DNA Res.">
        <title>Complete genome sequence of Yersinia pestis strain 91001, an isolate avirulent to humans.</title>
        <authorList>
            <person name="Song Y."/>
            <person name="Tong Z."/>
            <person name="Wang J."/>
            <person name="Wang L."/>
            <person name="Guo Z."/>
            <person name="Han Y."/>
            <person name="Zhang J."/>
            <person name="Pei D."/>
            <person name="Zhou D."/>
            <person name="Qin H."/>
            <person name="Pang X."/>
            <person name="Han Y."/>
            <person name="Zhai J."/>
            <person name="Li M."/>
            <person name="Cui B."/>
            <person name="Qi Z."/>
            <person name="Jin L."/>
            <person name="Dai R."/>
            <person name="Chen F."/>
            <person name="Li S."/>
            <person name="Ye C."/>
            <person name="Du Z."/>
            <person name="Lin W."/>
            <person name="Wang J."/>
            <person name="Yu J."/>
            <person name="Yang H."/>
            <person name="Wang J."/>
            <person name="Huang P."/>
            <person name="Yang R."/>
        </authorList>
    </citation>
    <scope>NUCLEOTIDE SEQUENCE [LARGE SCALE GENOMIC DNA]</scope>
    <source>
        <strain>91001 / Biovar Mediaevalis</strain>
    </source>
</reference>
<accession>Q8ZHK5</accession>
<accession>Q0WIF2</accession>
<protein>
    <recommendedName>
        <fullName evidence="1">Lysine--tRNA ligase</fullName>
        <ecNumber evidence="1">6.1.1.6</ecNumber>
    </recommendedName>
    <alternativeName>
        <fullName evidence="1">Lysyl-tRNA synthetase</fullName>
        <shortName evidence="1">LysRS</shortName>
    </alternativeName>
</protein>
<keyword id="KW-0030">Aminoacyl-tRNA synthetase</keyword>
<keyword id="KW-0067">ATP-binding</keyword>
<keyword id="KW-0963">Cytoplasm</keyword>
<keyword id="KW-0436">Ligase</keyword>
<keyword id="KW-0460">Magnesium</keyword>
<keyword id="KW-0479">Metal-binding</keyword>
<keyword id="KW-0547">Nucleotide-binding</keyword>
<keyword id="KW-0648">Protein biosynthesis</keyword>
<keyword id="KW-1185">Reference proteome</keyword>
<gene>
    <name evidence="1" type="primary">lysS</name>
    <name type="ordered locus">YPO0888</name>
    <name type="ordered locus">y3272</name>
    <name type="ordered locus">YP_3584</name>
</gene>
<evidence type="ECO:0000255" key="1">
    <source>
        <dbReference type="HAMAP-Rule" id="MF_00252"/>
    </source>
</evidence>
<comment type="catalytic activity">
    <reaction evidence="1">
        <text>tRNA(Lys) + L-lysine + ATP = L-lysyl-tRNA(Lys) + AMP + diphosphate</text>
        <dbReference type="Rhea" id="RHEA:20792"/>
        <dbReference type="Rhea" id="RHEA-COMP:9696"/>
        <dbReference type="Rhea" id="RHEA-COMP:9697"/>
        <dbReference type="ChEBI" id="CHEBI:30616"/>
        <dbReference type="ChEBI" id="CHEBI:32551"/>
        <dbReference type="ChEBI" id="CHEBI:33019"/>
        <dbReference type="ChEBI" id="CHEBI:78442"/>
        <dbReference type="ChEBI" id="CHEBI:78529"/>
        <dbReference type="ChEBI" id="CHEBI:456215"/>
        <dbReference type="EC" id="6.1.1.6"/>
    </reaction>
</comment>
<comment type="cofactor">
    <cofactor evidence="1">
        <name>Mg(2+)</name>
        <dbReference type="ChEBI" id="CHEBI:18420"/>
    </cofactor>
    <text evidence="1">Binds 3 Mg(2+) ions per subunit.</text>
</comment>
<comment type="subunit">
    <text evidence="1">Homodimer.</text>
</comment>
<comment type="subcellular location">
    <subcellularLocation>
        <location evidence="1">Cytoplasm</location>
    </subcellularLocation>
</comment>
<comment type="similarity">
    <text evidence="1">Belongs to the class-II aminoacyl-tRNA synthetase family.</text>
</comment>
<proteinExistence type="inferred from homology"/>
<feature type="chain" id="PRO_0000152710" description="Lysine--tRNA ligase">
    <location>
        <begin position="1"/>
        <end position="505"/>
    </location>
</feature>
<feature type="binding site" evidence="1">
    <location>
        <position position="415"/>
    </location>
    <ligand>
        <name>Mg(2+)</name>
        <dbReference type="ChEBI" id="CHEBI:18420"/>
        <label>1</label>
    </ligand>
</feature>
<feature type="binding site" evidence="1">
    <location>
        <position position="422"/>
    </location>
    <ligand>
        <name>Mg(2+)</name>
        <dbReference type="ChEBI" id="CHEBI:18420"/>
        <label>1</label>
    </ligand>
</feature>
<feature type="binding site" evidence="1">
    <location>
        <position position="422"/>
    </location>
    <ligand>
        <name>Mg(2+)</name>
        <dbReference type="ChEBI" id="CHEBI:18420"/>
        <label>2</label>
    </ligand>
</feature>
<dbReference type="EC" id="6.1.1.6" evidence="1"/>
<dbReference type="EMBL" id="AL590842">
    <property type="protein sequence ID" value="CAL19555.1"/>
    <property type="molecule type" value="Genomic_DNA"/>
</dbReference>
<dbReference type="EMBL" id="AE009952">
    <property type="protein sequence ID" value="AAM86822.1"/>
    <property type="molecule type" value="Genomic_DNA"/>
</dbReference>
<dbReference type="EMBL" id="AE017042">
    <property type="protein sequence ID" value="AAS63735.1"/>
    <property type="molecule type" value="Genomic_DNA"/>
</dbReference>
<dbReference type="PIR" id="AI0108">
    <property type="entry name" value="AI0108"/>
</dbReference>
<dbReference type="RefSeq" id="WP_002209930.1">
    <property type="nucleotide sequence ID" value="NZ_WUCM01000038.1"/>
</dbReference>
<dbReference type="RefSeq" id="YP_002345936.1">
    <property type="nucleotide sequence ID" value="NC_003143.1"/>
</dbReference>
<dbReference type="SMR" id="Q8ZHK5"/>
<dbReference type="IntAct" id="Q8ZHK5">
    <property type="interactions" value="9"/>
</dbReference>
<dbReference type="STRING" id="214092.YPO0888"/>
<dbReference type="PaxDb" id="214092-YPO0888"/>
<dbReference type="DNASU" id="1148219"/>
<dbReference type="EnsemblBacteria" id="AAS63735">
    <property type="protein sequence ID" value="AAS63735"/>
    <property type="gene ID" value="YP_3584"/>
</dbReference>
<dbReference type="GeneID" id="57973752"/>
<dbReference type="KEGG" id="ype:YPO0888"/>
<dbReference type="KEGG" id="ypk:y3272"/>
<dbReference type="KEGG" id="ypm:YP_3584"/>
<dbReference type="PATRIC" id="fig|214092.21.peg.1159"/>
<dbReference type="eggNOG" id="COG1190">
    <property type="taxonomic scope" value="Bacteria"/>
</dbReference>
<dbReference type="HOGENOM" id="CLU_008255_6_0_6"/>
<dbReference type="OMA" id="DFRNEGM"/>
<dbReference type="OrthoDB" id="9801152at2"/>
<dbReference type="Proteomes" id="UP000000815">
    <property type="component" value="Chromosome"/>
</dbReference>
<dbReference type="Proteomes" id="UP000001019">
    <property type="component" value="Chromosome"/>
</dbReference>
<dbReference type="Proteomes" id="UP000002490">
    <property type="component" value="Chromosome"/>
</dbReference>
<dbReference type="GO" id="GO:0005737">
    <property type="term" value="C:cytoplasm"/>
    <property type="evidence" value="ECO:0000318"/>
    <property type="project" value="GO_Central"/>
</dbReference>
<dbReference type="GO" id="GO:0005829">
    <property type="term" value="C:cytosol"/>
    <property type="evidence" value="ECO:0000318"/>
    <property type="project" value="GO_Central"/>
</dbReference>
<dbReference type="GO" id="GO:0005524">
    <property type="term" value="F:ATP binding"/>
    <property type="evidence" value="ECO:0007669"/>
    <property type="project" value="UniProtKB-UniRule"/>
</dbReference>
<dbReference type="GO" id="GO:0004824">
    <property type="term" value="F:lysine-tRNA ligase activity"/>
    <property type="evidence" value="ECO:0000318"/>
    <property type="project" value="GO_Central"/>
</dbReference>
<dbReference type="GO" id="GO:0000287">
    <property type="term" value="F:magnesium ion binding"/>
    <property type="evidence" value="ECO:0007669"/>
    <property type="project" value="UniProtKB-UniRule"/>
</dbReference>
<dbReference type="GO" id="GO:0000049">
    <property type="term" value="F:tRNA binding"/>
    <property type="evidence" value="ECO:0000318"/>
    <property type="project" value="GO_Central"/>
</dbReference>
<dbReference type="GO" id="GO:0006430">
    <property type="term" value="P:lysyl-tRNA aminoacylation"/>
    <property type="evidence" value="ECO:0000318"/>
    <property type="project" value="GO_Central"/>
</dbReference>
<dbReference type="CDD" id="cd00775">
    <property type="entry name" value="LysRS_core"/>
    <property type="match status" value="1"/>
</dbReference>
<dbReference type="CDD" id="cd04322">
    <property type="entry name" value="LysRS_N"/>
    <property type="match status" value="1"/>
</dbReference>
<dbReference type="FunFam" id="2.40.50.140:FF:000024">
    <property type="entry name" value="Lysine--tRNA ligase"/>
    <property type="match status" value="1"/>
</dbReference>
<dbReference type="FunFam" id="3.30.930.10:FF:000001">
    <property type="entry name" value="Lysine--tRNA ligase"/>
    <property type="match status" value="1"/>
</dbReference>
<dbReference type="Gene3D" id="3.30.930.10">
    <property type="entry name" value="Bira Bifunctional Protein, Domain 2"/>
    <property type="match status" value="1"/>
</dbReference>
<dbReference type="Gene3D" id="2.40.50.140">
    <property type="entry name" value="Nucleic acid-binding proteins"/>
    <property type="match status" value="1"/>
</dbReference>
<dbReference type="HAMAP" id="MF_00252">
    <property type="entry name" value="Lys_tRNA_synth_class2"/>
    <property type="match status" value="1"/>
</dbReference>
<dbReference type="InterPro" id="IPR004364">
    <property type="entry name" value="Aa-tRNA-synt_II"/>
</dbReference>
<dbReference type="InterPro" id="IPR006195">
    <property type="entry name" value="aa-tRNA-synth_II"/>
</dbReference>
<dbReference type="InterPro" id="IPR045864">
    <property type="entry name" value="aa-tRNA-synth_II/BPL/LPL"/>
</dbReference>
<dbReference type="InterPro" id="IPR002313">
    <property type="entry name" value="Lys-tRNA-ligase_II"/>
</dbReference>
<dbReference type="InterPro" id="IPR034762">
    <property type="entry name" value="Lys-tRNA-ligase_II_bac/euk"/>
</dbReference>
<dbReference type="InterPro" id="IPR044136">
    <property type="entry name" value="Lys-tRNA-ligase_II_N"/>
</dbReference>
<dbReference type="InterPro" id="IPR018149">
    <property type="entry name" value="Lys-tRNA-synth_II_C"/>
</dbReference>
<dbReference type="InterPro" id="IPR012340">
    <property type="entry name" value="NA-bd_OB-fold"/>
</dbReference>
<dbReference type="InterPro" id="IPR004365">
    <property type="entry name" value="NA-bd_OB_tRNA"/>
</dbReference>
<dbReference type="NCBIfam" id="TIGR00499">
    <property type="entry name" value="lysS_bact"/>
    <property type="match status" value="1"/>
</dbReference>
<dbReference type="NCBIfam" id="NF001756">
    <property type="entry name" value="PRK00484.1"/>
    <property type="match status" value="1"/>
</dbReference>
<dbReference type="PANTHER" id="PTHR42918:SF15">
    <property type="entry name" value="LYSINE--TRNA LIGASE, CHLOROPLASTIC_MITOCHONDRIAL"/>
    <property type="match status" value="1"/>
</dbReference>
<dbReference type="PANTHER" id="PTHR42918">
    <property type="entry name" value="LYSYL-TRNA SYNTHETASE"/>
    <property type="match status" value="1"/>
</dbReference>
<dbReference type="Pfam" id="PF00152">
    <property type="entry name" value="tRNA-synt_2"/>
    <property type="match status" value="1"/>
</dbReference>
<dbReference type="Pfam" id="PF01336">
    <property type="entry name" value="tRNA_anti-codon"/>
    <property type="match status" value="1"/>
</dbReference>
<dbReference type="PIRSF" id="PIRSF039101">
    <property type="entry name" value="LysRS2"/>
    <property type="match status" value="1"/>
</dbReference>
<dbReference type="PRINTS" id="PR00982">
    <property type="entry name" value="TRNASYNTHLYS"/>
</dbReference>
<dbReference type="SUPFAM" id="SSF55681">
    <property type="entry name" value="Class II aaRS and biotin synthetases"/>
    <property type="match status" value="1"/>
</dbReference>
<dbReference type="SUPFAM" id="SSF50249">
    <property type="entry name" value="Nucleic acid-binding proteins"/>
    <property type="match status" value="1"/>
</dbReference>
<dbReference type="PROSITE" id="PS50862">
    <property type="entry name" value="AA_TRNA_LIGASE_II"/>
    <property type="match status" value="1"/>
</dbReference>
<sequence>MSEQKPQVAEQAQELNSELQARREKLAVLRGKGIAFPNDFRRENLSDQLHAEFDSKENEELEALNIDVTVAGRMMTRRIMGKASFVTLQDVGGRIQLYVSRDDLPEGVYNEEFKKWDLGDILGARGKLFKTKTGELSIHCSELRLLTKALRPLPDKFHGLADQETRYRQRYLDLIANDESRHTFKVRSQVMSGIRSFMVEKGFMEVETPMMQVIPGGASARPFVTHHNALDIDMYLRIAPELYLKRLVVGGFERVFEINRNFRNEGVSPRHNPEFTMMELYMAYADYKDLIVLTEELFRTLTETILGSSVVQYGEQTFDFGKPFAKLTMKEAICKYRPETNVADLDDMDKAVAIAESLGIKVEKSWGLGRIQCEIFEETAESHLIQPTFITEYPAEVSPLARRNDDNPFITDRFEFFIGGREIGNGFSELNDAEDQAQRFADQVSAKEAGDDEAMFYDEDYITALEHGLPPTAGLGIGIDRMVMLFTNSHTIRDVILFPAMRPVK</sequence>
<organism>
    <name type="scientific">Yersinia pestis</name>
    <dbReference type="NCBI Taxonomy" id="632"/>
    <lineage>
        <taxon>Bacteria</taxon>
        <taxon>Pseudomonadati</taxon>
        <taxon>Pseudomonadota</taxon>
        <taxon>Gammaproteobacteria</taxon>
        <taxon>Enterobacterales</taxon>
        <taxon>Yersiniaceae</taxon>
        <taxon>Yersinia</taxon>
    </lineage>
</organism>
<name>SYK_YERPE</name>